<accession>A8A214</accession>
<feature type="chain" id="PRO_1000058672" description="GTP cyclohydrolase 1">
    <location>
        <begin position="1"/>
        <end position="222"/>
    </location>
</feature>
<feature type="binding site" evidence="2">
    <location>
        <position position="111"/>
    </location>
    <ligand>
        <name>Zn(2+)</name>
        <dbReference type="ChEBI" id="CHEBI:29105"/>
    </ligand>
</feature>
<feature type="binding site" evidence="2">
    <location>
        <position position="114"/>
    </location>
    <ligand>
        <name>Zn(2+)</name>
        <dbReference type="ChEBI" id="CHEBI:29105"/>
    </ligand>
</feature>
<feature type="binding site" evidence="2">
    <location>
        <position position="182"/>
    </location>
    <ligand>
        <name>Zn(2+)</name>
        <dbReference type="ChEBI" id="CHEBI:29105"/>
    </ligand>
</feature>
<evidence type="ECO:0000250" key="1"/>
<evidence type="ECO:0000255" key="2">
    <source>
        <dbReference type="HAMAP-Rule" id="MF_00223"/>
    </source>
</evidence>
<organism>
    <name type="scientific">Escherichia coli O9:H4 (strain HS)</name>
    <dbReference type="NCBI Taxonomy" id="331112"/>
    <lineage>
        <taxon>Bacteria</taxon>
        <taxon>Pseudomonadati</taxon>
        <taxon>Pseudomonadota</taxon>
        <taxon>Gammaproteobacteria</taxon>
        <taxon>Enterobacterales</taxon>
        <taxon>Enterobacteriaceae</taxon>
        <taxon>Escherichia</taxon>
    </lineage>
</organism>
<reference key="1">
    <citation type="journal article" date="2008" name="J. Bacteriol.">
        <title>The pangenome structure of Escherichia coli: comparative genomic analysis of E. coli commensal and pathogenic isolates.</title>
        <authorList>
            <person name="Rasko D.A."/>
            <person name="Rosovitz M.J."/>
            <person name="Myers G.S.A."/>
            <person name="Mongodin E.F."/>
            <person name="Fricke W.F."/>
            <person name="Gajer P."/>
            <person name="Crabtree J."/>
            <person name="Sebaihia M."/>
            <person name="Thomson N.R."/>
            <person name="Chaudhuri R."/>
            <person name="Henderson I.R."/>
            <person name="Sperandio V."/>
            <person name="Ravel J."/>
        </authorList>
    </citation>
    <scope>NUCLEOTIDE SEQUENCE [LARGE SCALE GENOMIC DNA]</scope>
    <source>
        <strain>HS</strain>
    </source>
</reference>
<gene>
    <name evidence="2" type="primary">folE</name>
    <name type="ordered locus">EcHS_A2287</name>
</gene>
<keyword id="KW-0342">GTP-binding</keyword>
<keyword id="KW-0378">Hydrolase</keyword>
<keyword id="KW-0479">Metal-binding</keyword>
<keyword id="KW-0547">Nucleotide-binding</keyword>
<keyword id="KW-0554">One-carbon metabolism</keyword>
<keyword id="KW-0862">Zinc</keyword>
<dbReference type="EC" id="3.5.4.16" evidence="2"/>
<dbReference type="EMBL" id="CP000802">
    <property type="protein sequence ID" value="ABV06568.1"/>
    <property type="molecule type" value="Genomic_DNA"/>
</dbReference>
<dbReference type="RefSeq" id="WP_001139613.1">
    <property type="nucleotide sequence ID" value="NC_009800.1"/>
</dbReference>
<dbReference type="SMR" id="A8A214"/>
<dbReference type="GeneID" id="93775029"/>
<dbReference type="KEGG" id="ecx:EcHS_A2287"/>
<dbReference type="HOGENOM" id="CLU_049768_3_2_6"/>
<dbReference type="UniPathway" id="UPA00848">
    <property type="reaction ID" value="UER00151"/>
</dbReference>
<dbReference type="GO" id="GO:0005737">
    <property type="term" value="C:cytoplasm"/>
    <property type="evidence" value="ECO:0007669"/>
    <property type="project" value="TreeGrafter"/>
</dbReference>
<dbReference type="GO" id="GO:0005525">
    <property type="term" value="F:GTP binding"/>
    <property type="evidence" value="ECO:0007669"/>
    <property type="project" value="UniProtKB-KW"/>
</dbReference>
<dbReference type="GO" id="GO:0003934">
    <property type="term" value="F:GTP cyclohydrolase I activity"/>
    <property type="evidence" value="ECO:0007669"/>
    <property type="project" value="UniProtKB-UniRule"/>
</dbReference>
<dbReference type="GO" id="GO:0008270">
    <property type="term" value="F:zinc ion binding"/>
    <property type="evidence" value="ECO:0007669"/>
    <property type="project" value="UniProtKB-UniRule"/>
</dbReference>
<dbReference type="GO" id="GO:0006730">
    <property type="term" value="P:one-carbon metabolic process"/>
    <property type="evidence" value="ECO:0007669"/>
    <property type="project" value="UniProtKB-UniRule"/>
</dbReference>
<dbReference type="GO" id="GO:0006729">
    <property type="term" value="P:tetrahydrobiopterin biosynthetic process"/>
    <property type="evidence" value="ECO:0007669"/>
    <property type="project" value="TreeGrafter"/>
</dbReference>
<dbReference type="GO" id="GO:0046654">
    <property type="term" value="P:tetrahydrofolate biosynthetic process"/>
    <property type="evidence" value="ECO:0007669"/>
    <property type="project" value="UniProtKB-UniRule"/>
</dbReference>
<dbReference type="CDD" id="cd00642">
    <property type="entry name" value="GTP_cyclohydro1"/>
    <property type="match status" value="1"/>
</dbReference>
<dbReference type="FunFam" id="1.10.286.10:FF:000002">
    <property type="entry name" value="GTP cyclohydrolase 1"/>
    <property type="match status" value="1"/>
</dbReference>
<dbReference type="FunFam" id="3.30.1130.10:FF:000001">
    <property type="entry name" value="GTP cyclohydrolase 1"/>
    <property type="match status" value="1"/>
</dbReference>
<dbReference type="Gene3D" id="1.10.286.10">
    <property type="match status" value="1"/>
</dbReference>
<dbReference type="Gene3D" id="3.30.1130.10">
    <property type="match status" value="1"/>
</dbReference>
<dbReference type="HAMAP" id="MF_00223">
    <property type="entry name" value="FolE"/>
    <property type="match status" value="1"/>
</dbReference>
<dbReference type="InterPro" id="IPR043133">
    <property type="entry name" value="GTP-CH-I_C/QueF"/>
</dbReference>
<dbReference type="InterPro" id="IPR043134">
    <property type="entry name" value="GTP-CH-I_N"/>
</dbReference>
<dbReference type="InterPro" id="IPR001474">
    <property type="entry name" value="GTP_CycHdrlase_I"/>
</dbReference>
<dbReference type="InterPro" id="IPR018234">
    <property type="entry name" value="GTP_CycHdrlase_I_CS"/>
</dbReference>
<dbReference type="InterPro" id="IPR020602">
    <property type="entry name" value="GTP_CycHdrlase_I_dom"/>
</dbReference>
<dbReference type="NCBIfam" id="TIGR00063">
    <property type="entry name" value="folE"/>
    <property type="match status" value="1"/>
</dbReference>
<dbReference type="NCBIfam" id="NF006824">
    <property type="entry name" value="PRK09347.1-1"/>
    <property type="match status" value="1"/>
</dbReference>
<dbReference type="NCBIfam" id="NF006826">
    <property type="entry name" value="PRK09347.1-3"/>
    <property type="match status" value="1"/>
</dbReference>
<dbReference type="PANTHER" id="PTHR11109:SF7">
    <property type="entry name" value="GTP CYCLOHYDROLASE 1"/>
    <property type="match status" value="1"/>
</dbReference>
<dbReference type="PANTHER" id="PTHR11109">
    <property type="entry name" value="GTP CYCLOHYDROLASE I"/>
    <property type="match status" value="1"/>
</dbReference>
<dbReference type="Pfam" id="PF01227">
    <property type="entry name" value="GTP_cyclohydroI"/>
    <property type="match status" value="1"/>
</dbReference>
<dbReference type="SUPFAM" id="SSF55620">
    <property type="entry name" value="Tetrahydrobiopterin biosynthesis enzymes-like"/>
    <property type="match status" value="1"/>
</dbReference>
<dbReference type="PROSITE" id="PS00859">
    <property type="entry name" value="GTP_CYCLOHYDROL_1_1"/>
    <property type="match status" value="1"/>
</dbReference>
<dbReference type="PROSITE" id="PS00860">
    <property type="entry name" value="GTP_CYCLOHYDROL_1_2"/>
    <property type="match status" value="1"/>
</dbReference>
<name>GCH1_ECOHS</name>
<comment type="catalytic activity">
    <reaction evidence="2">
        <text>GTP + H2O = 7,8-dihydroneopterin 3'-triphosphate + formate + H(+)</text>
        <dbReference type="Rhea" id="RHEA:17473"/>
        <dbReference type="ChEBI" id="CHEBI:15377"/>
        <dbReference type="ChEBI" id="CHEBI:15378"/>
        <dbReference type="ChEBI" id="CHEBI:15740"/>
        <dbReference type="ChEBI" id="CHEBI:37565"/>
        <dbReference type="ChEBI" id="CHEBI:58462"/>
        <dbReference type="EC" id="3.5.4.16"/>
    </reaction>
</comment>
<comment type="pathway">
    <text evidence="2">Cofactor biosynthesis; 7,8-dihydroneopterin triphosphate biosynthesis; 7,8-dihydroneopterin triphosphate from GTP: step 1/1.</text>
</comment>
<comment type="subunit">
    <text evidence="1">Toroid-shaped homodecamer, composed of two pentamers of five dimers.</text>
</comment>
<comment type="similarity">
    <text evidence="2">Belongs to the GTP cyclohydrolase I family.</text>
</comment>
<protein>
    <recommendedName>
        <fullName evidence="2">GTP cyclohydrolase 1</fullName>
        <ecNumber evidence="2">3.5.4.16</ecNumber>
    </recommendedName>
    <alternativeName>
        <fullName evidence="2">GTP cyclohydrolase I</fullName>
        <shortName evidence="2">GTP-CH-I</shortName>
    </alternativeName>
</protein>
<sequence length="222" mass="24831">MPSLSKEAALVHEALVARGLETPLRPPVHEMDNETRKSLIAGHMTEIMQLLNLDLADDSLMETPHRIAKMYVDEIFSGLDYANFPKITLIENKMKVDEMVTVRDITLTSTCEHHFVTIDGKATVAYIPKDSVIGLSKINRIVQFFAQRPQVQERLTQQILIALQTLLGTNNVAVSIDAVHYCVKARGIRDATSATTTTSLGGLFKSSQNTRHEFLRAVRHHN</sequence>
<proteinExistence type="inferred from homology"/>